<reference key="1">
    <citation type="journal article" date="1996" name="Nucleic Acids Res.">
        <title>Complete sequence analysis of the genome of the bacterium Mycoplasma pneumoniae.</title>
        <authorList>
            <person name="Himmelreich R."/>
            <person name="Hilbert H."/>
            <person name="Plagens H."/>
            <person name="Pirkl E."/>
            <person name="Li B.-C."/>
            <person name="Herrmann R."/>
        </authorList>
    </citation>
    <scope>NUCLEOTIDE SEQUENCE [LARGE SCALE GENOMIC DNA]</scope>
    <source>
        <strain>ATCC 29342 / M129 / Subtype 1</strain>
    </source>
</reference>
<dbReference type="EMBL" id="U00089">
    <property type="protein sequence ID" value="AAB95718.1"/>
    <property type="molecule type" value="Genomic_DNA"/>
</dbReference>
<dbReference type="PIR" id="S73396">
    <property type="entry name" value="S73396"/>
</dbReference>
<dbReference type="RefSeq" id="NP_109773.1">
    <property type="nucleotide sequence ID" value="NC_000912.1"/>
</dbReference>
<dbReference type="RefSeq" id="WP_010874442.1">
    <property type="nucleotide sequence ID" value="NC_000912.1"/>
</dbReference>
<dbReference type="SMR" id="P75608"/>
<dbReference type="STRING" id="272634.MPN_085"/>
<dbReference type="EnsemblBacteria" id="AAB95718">
    <property type="protein sequence ID" value="AAB95718"/>
    <property type="gene ID" value="MPN_085"/>
</dbReference>
<dbReference type="KEGG" id="mpn:MPN_085"/>
<dbReference type="PATRIC" id="fig|272634.6.peg.87"/>
<dbReference type="HOGENOM" id="CLU_622303_0_0_14"/>
<dbReference type="BioCyc" id="MPNE272634:G1GJ3-134-MONOMER"/>
<dbReference type="Proteomes" id="UP000000808">
    <property type="component" value="Chromosome"/>
</dbReference>
<dbReference type="GO" id="GO:0005886">
    <property type="term" value="C:plasma membrane"/>
    <property type="evidence" value="ECO:0007669"/>
    <property type="project" value="UniProtKB-SubCell"/>
</dbReference>
<accession>P75608</accession>
<keyword id="KW-1003">Cell membrane</keyword>
<keyword id="KW-0472">Membrane</keyword>
<keyword id="KW-1185">Reference proteome</keyword>
<keyword id="KW-0812">Transmembrane</keyword>
<keyword id="KW-1133">Transmembrane helix</keyword>
<evidence type="ECO:0000255" key="1"/>
<evidence type="ECO:0000305" key="2"/>
<protein>
    <recommendedName>
        <fullName>Uncharacterized protein MPN_085</fullName>
    </recommendedName>
</protein>
<organism>
    <name type="scientific">Mycoplasma pneumoniae (strain ATCC 29342 / M129 / Subtype 1)</name>
    <name type="common">Mycoplasmoides pneumoniae</name>
    <dbReference type="NCBI Taxonomy" id="272634"/>
    <lineage>
        <taxon>Bacteria</taxon>
        <taxon>Bacillati</taxon>
        <taxon>Mycoplasmatota</taxon>
        <taxon>Mycoplasmoidales</taxon>
        <taxon>Mycoplasmoidaceae</taxon>
        <taxon>Mycoplasmoides</taxon>
    </lineage>
</organism>
<comment type="subcellular location">
    <subcellularLocation>
        <location evidence="2">Cell membrane</location>
        <topology evidence="2">Multi-pass membrane protein</topology>
    </subcellularLocation>
</comment>
<comment type="similarity">
    <text evidence="2">To M.pneumoniae MPN_087.</text>
</comment>
<proteinExistence type="predicted"/>
<feature type="chain" id="PRO_0000210636" description="Uncharacterized protein MPN_085">
    <location>
        <begin position="1"/>
        <end position="440"/>
    </location>
</feature>
<feature type="transmembrane region" description="Helical" evidence="1">
    <location>
        <begin position="26"/>
        <end position="46"/>
    </location>
</feature>
<feature type="transmembrane region" description="Helical" evidence="1">
    <location>
        <begin position="59"/>
        <end position="79"/>
    </location>
</feature>
<feature type="transmembrane region" description="Helical" evidence="1">
    <location>
        <begin position="96"/>
        <end position="116"/>
    </location>
</feature>
<feature type="transmembrane region" description="Helical" evidence="1">
    <location>
        <begin position="138"/>
        <end position="158"/>
    </location>
</feature>
<feature type="transmembrane region" description="Helical" evidence="1">
    <location>
        <begin position="211"/>
        <end position="231"/>
    </location>
</feature>
<feature type="transmembrane region" description="Helical" evidence="1">
    <location>
        <begin position="241"/>
        <end position="261"/>
    </location>
</feature>
<feature type="transmembrane region" description="Helical" evidence="1">
    <location>
        <begin position="263"/>
        <end position="283"/>
    </location>
</feature>
<feature type="transmembrane region" description="Helical" evidence="1">
    <location>
        <begin position="284"/>
        <end position="304"/>
    </location>
</feature>
<feature type="transmembrane region" description="Helical" evidence="1">
    <location>
        <begin position="394"/>
        <end position="414"/>
    </location>
</feature>
<feature type="transmembrane region" description="Helical" evidence="1">
    <location>
        <begin position="418"/>
        <end position="438"/>
    </location>
</feature>
<gene>
    <name type="ordered locus">MPN_085</name>
    <name type="ORF">MP070</name>
    <name type="ORF">R02_orf440</name>
</gene>
<name>Y085_MYCPN</name>
<sequence>MQLTTSQQMQTNFLTTNKHHLLKYTNGLIWCWWLFVISLVLASSTFRGFFLGTINIVNFVFWILALIFGVAVAFINGVLSSELKENSVFQEEQKRFFLGFFFPQMAFCNALWLKLKLSYLNSERENLLEKIKQKLKKLTLSVFVVWGIYCVLATSIYLPNALRILNIYQIPNLIALINNRLSEILPDGNRYFLGHSSFAFHYYEIVSRIPFLVFFIIPTITLITLGCYLFAYLRFINSNKLRKPLSTLSIVIMLTDVVGIIQWIIIDILLIWLNVPFVIFVIFWVIKLVLPLAMIGTFVSSLTIYKKVTSKEWLAIKEEQINLTTMNININMGEQSSKNMNSFENHESNERNSLQIYQQHSSMMSETKRKQSSLSYDARILLPKSPYNTKKTLFLIIFFSIISLILATIGSVFISFAIVQISIPFYVIGGVIWFFTFISL</sequence>